<protein>
    <recommendedName>
        <fullName evidence="1">Probable transcriptional regulatory protein MADE_1004275</fullName>
    </recommendedName>
</protein>
<gene>
    <name type="ordered locus">MADE_1004275</name>
</gene>
<comment type="subcellular location">
    <subcellularLocation>
        <location evidence="1">Cytoplasm</location>
    </subcellularLocation>
</comment>
<comment type="similarity">
    <text evidence="1">Belongs to the TACO1 family.</text>
</comment>
<evidence type="ECO:0000255" key="1">
    <source>
        <dbReference type="HAMAP-Rule" id="MF_00693"/>
    </source>
</evidence>
<organism>
    <name type="scientific">Alteromonas mediterranea (strain DSM 17117 / CIP 110805 / LMG 28347 / Deep ecotype)</name>
    <dbReference type="NCBI Taxonomy" id="1774373"/>
    <lineage>
        <taxon>Bacteria</taxon>
        <taxon>Pseudomonadati</taxon>
        <taxon>Pseudomonadota</taxon>
        <taxon>Gammaproteobacteria</taxon>
        <taxon>Alteromonadales</taxon>
        <taxon>Alteromonadaceae</taxon>
        <taxon>Alteromonas/Salinimonas group</taxon>
        <taxon>Alteromonas</taxon>
    </lineage>
</organism>
<keyword id="KW-0963">Cytoplasm</keyword>
<keyword id="KW-0238">DNA-binding</keyword>
<keyword id="KW-0804">Transcription</keyword>
<keyword id="KW-0805">Transcription regulation</keyword>
<dbReference type="EMBL" id="CP001103">
    <property type="protein sequence ID" value="AEA97003.1"/>
    <property type="molecule type" value="Genomic_DNA"/>
</dbReference>
<dbReference type="RefSeq" id="WP_012517357.1">
    <property type="nucleotide sequence ID" value="NC_011138.3"/>
</dbReference>
<dbReference type="SMR" id="B4RWE1"/>
<dbReference type="KEGG" id="amc:MADE_1004275"/>
<dbReference type="HOGENOM" id="CLU_062974_2_0_6"/>
<dbReference type="Proteomes" id="UP000001870">
    <property type="component" value="Chromosome"/>
</dbReference>
<dbReference type="GO" id="GO:0005829">
    <property type="term" value="C:cytosol"/>
    <property type="evidence" value="ECO:0007669"/>
    <property type="project" value="TreeGrafter"/>
</dbReference>
<dbReference type="GO" id="GO:0003677">
    <property type="term" value="F:DNA binding"/>
    <property type="evidence" value="ECO:0007669"/>
    <property type="project" value="UniProtKB-UniRule"/>
</dbReference>
<dbReference type="GO" id="GO:0006355">
    <property type="term" value="P:regulation of DNA-templated transcription"/>
    <property type="evidence" value="ECO:0007669"/>
    <property type="project" value="UniProtKB-UniRule"/>
</dbReference>
<dbReference type="FunFam" id="1.10.10.200:FF:000003">
    <property type="entry name" value="Probable transcriptional regulatory protein YeeN"/>
    <property type="match status" value="1"/>
</dbReference>
<dbReference type="Gene3D" id="1.10.10.200">
    <property type="match status" value="1"/>
</dbReference>
<dbReference type="Gene3D" id="3.30.70.980">
    <property type="match status" value="2"/>
</dbReference>
<dbReference type="HAMAP" id="MF_00693">
    <property type="entry name" value="Transcrip_reg_TACO1"/>
    <property type="match status" value="1"/>
</dbReference>
<dbReference type="InterPro" id="IPR017856">
    <property type="entry name" value="Integrase-like_N"/>
</dbReference>
<dbReference type="InterPro" id="IPR048300">
    <property type="entry name" value="TACO1_YebC-like_2nd/3rd_dom"/>
</dbReference>
<dbReference type="InterPro" id="IPR049083">
    <property type="entry name" value="TACO1_YebC_N"/>
</dbReference>
<dbReference type="InterPro" id="IPR002876">
    <property type="entry name" value="Transcrip_reg_TACO1-like"/>
</dbReference>
<dbReference type="InterPro" id="IPR026564">
    <property type="entry name" value="Transcrip_reg_TACO1-like_dom3"/>
</dbReference>
<dbReference type="InterPro" id="IPR029072">
    <property type="entry name" value="YebC-like"/>
</dbReference>
<dbReference type="NCBIfam" id="NF009044">
    <property type="entry name" value="PRK12378.1"/>
    <property type="match status" value="1"/>
</dbReference>
<dbReference type="PANTHER" id="PTHR12532">
    <property type="entry name" value="TRANSLATIONAL ACTIVATOR OF CYTOCHROME C OXIDASE 1"/>
    <property type="match status" value="1"/>
</dbReference>
<dbReference type="PANTHER" id="PTHR12532:SF0">
    <property type="entry name" value="TRANSLATIONAL ACTIVATOR OF CYTOCHROME C OXIDASE 1"/>
    <property type="match status" value="1"/>
</dbReference>
<dbReference type="Pfam" id="PF20772">
    <property type="entry name" value="TACO1_YebC_N"/>
    <property type="match status" value="1"/>
</dbReference>
<dbReference type="Pfam" id="PF01709">
    <property type="entry name" value="Transcrip_reg"/>
    <property type="match status" value="1"/>
</dbReference>
<dbReference type="SUPFAM" id="SSF75625">
    <property type="entry name" value="YebC-like"/>
    <property type="match status" value="1"/>
</dbReference>
<reference key="1">
    <citation type="journal article" date="2008" name="ISME J.">
        <title>Comparative genomics of two ecotypes of the marine planktonic copiotroph Alteromonas macleodii suggests alternative lifestyles associated with different kinds of particulate organic matter.</title>
        <authorList>
            <person name="Ivars-Martinez E."/>
            <person name="Martin-Cuadrado A.-B."/>
            <person name="D'Auria G."/>
            <person name="Mira A."/>
            <person name="Ferriera S."/>
            <person name="Johnson J."/>
            <person name="Friedman R."/>
            <person name="Rodriguez-Valera F."/>
        </authorList>
    </citation>
    <scope>NUCLEOTIDE SEQUENCE [LARGE SCALE GENOMIC DNA]</scope>
    <source>
        <strain>DSM 17117 / CIP 110805 / LMG 28347 / Deep ecotype</strain>
    </source>
</reference>
<feature type="chain" id="PRO_1000132147" description="Probable transcriptional regulatory protein MADE_1004275">
    <location>
        <begin position="1"/>
        <end position="240"/>
    </location>
</feature>
<sequence>MGRAFEVRKAAMAKTAGAKTKVYSKYGKEIYVCAKNGGADPDTNLSLRRLMEKAKKDQVPSHVIEKAIDKAAGGAGEDFQPMRYEGFGPGNCMVIVDCLSDNANRTITEVRNCFTKTNAKLGAQGAVSHMFDHQAVFQFEGDDEDAILEVLMEADVDVTDVEVEDGKVTVYAPHTEFYQVRTALTEAYPDLSFIADEISWMPQTETEISEEDMPMFEKFMDMLNDCDDVQDVYHNAVTPS</sequence>
<proteinExistence type="inferred from homology"/>
<accession>B4RWE1</accession>
<accession>F2GAW2</accession>
<name>Y3175_ALTMD</name>